<name>T120B_MOUSE</name>
<evidence type="ECO:0000255" key="1"/>
<evidence type="ECO:0000269" key="2">
    <source>
    </source>
</evidence>
<evidence type="ECO:0000269" key="3">
    <source>
    </source>
</evidence>
<evidence type="ECO:0000303" key="4">
    <source>
    </source>
</evidence>
<evidence type="ECO:0000303" key="5">
    <source>
    </source>
</evidence>
<evidence type="ECO:0000303" key="6">
    <source>
    </source>
</evidence>
<evidence type="ECO:0000305" key="7"/>
<evidence type="ECO:0000312" key="8">
    <source>
        <dbReference type="MGI" id="MGI:3603158"/>
    </source>
</evidence>
<feature type="chain" id="PRO_0000309530" description="Transmembrane protein 120B">
    <location>
        <begin position="1"/>
        <end position="339"/>
    </location>
</feature>
<feature type="transmembrane region" description="Helical" evidence="1">
    <location>
        <begin position="102"/>
        <end position="124"/>
    </location>
</feature>
<feature type="transmembrane region" description="Helical" evidence="1">
    <location>
        <begin position="132"/>
        <end position="152"/>
    </location>
</feature>
<feature type="transmembrane region" description="Helical" evidence="1">
    <location>
        <begin position="159"/>
        <end position="179"/>
    </location>
</feature>
<feature type="transmembrane region" description="Helical" evidence="1">
    <location>
        <begin position="187"/>
        <end position="207"/>
    </location>
</feature>
<feature type="transmembrane region" description="Helical" evidence="1">
    <location>
        <begin position="270"/>
        <end position="290"/>
    </location>
</feature>
<feature type="transmembrane region" description="Helical" evidence="1">
    <location>
        <begin position="302"/>
        <end position="322"/>
    </location>
</feature>
<feature type="coiled-coil region" evidence="1">
    <location>
        <begin position="1"/>
        <end position="67"/>
    </location>
</feature>
<feature type="splice variant" id="VSP_029233" description="In isoform 2." evidence="4">
    <location>
        <begin position="64"/>
        <end position="102"/>
    </location>
</feature>
<feature type="sequence conflict" description="In Ref. 2; AAI15786." evidence="7" ref="2">
    <original>I</original>
    <variation>T</variation>
    <location>
        <position position="211"/>
    </location>
</feature>
<proteinExistence type="evidence at transcript level"/>
<protein>
    <recommendedName>
        <fullName evidence="7">Transmembrane protein 120B</fullName>
    </recommendedName>
</protein>
<accession>Q3TA38</accession>
<accession>Q14BK6</accession>
<accession>Q8R243</accession>
<sequence length="339" mass="40407">MSGQLERCEREWHELEGEFQELQETHRIYKQKLEELTSLQTLCSTSISKQKRHLKDLKHTLQRYKRHSSHEEAALIQQMTANIKERQNVFFDMEAYLPKKNGLYLNLVLGNVSVTLLSNQAKFAYKDEYEKFKLYLTIILLLGAVACRFVLHYRVTDEVFNFLLVWYYCTLTIRESILISNGSRIKGWWVSHHYVSTFLSGVMLTWPNGLIYQKFRNQFLAFSIFQSCVQFLQYYYQRGCLYRLRALGERNHLDLTVEGFQSWMWRGLTFLLPFLFCGHFWQLYNAVTLFELSTHEECKEWQVFVLALTFLILFLGNFLTTLKVVHAKLHKNRNKTKQP</sequence>
<dbReference type="EMBL" id="AK158123">
    <property type="protein sequence ID" value="BAE34369.1"/>
    <property type="molecule type" value="mRNA"/>
</dbReference>
<dbReference type="EMBL" id="AK172110">
    <property type="protein sequence ID" value="BAE42832.1"/>
    <property type="molecule type" value="mRNA"/>
</dbReference>
<dbReference type="EMBL" id="BC022593">
    <property type="protein sequence ID" value="AAH22593.2"/>
    <property type="molecule type" value="mRNA"/>
</dbReference>
<dbReference type="EMBL" id="BC115785">
    <property type="protein sequence ID" value="AAI15786.1"/>
    <property type="molecule type" value="mRNA"/>
</dbReference>
<dbReference type="EMBL" id="BC118014">
    <property type="protein sequence ID" value="AAI18015.1"/>
    <property type="molecule type" value="mRNA"/>
</dbReference>
<dbReference type="CCDS" id="CCDS39262.1">
    <molecule id="Q3TA38-1"/>
</dbReference>
<dbReference type="RefSeq" id="NP_001034812.1">
    <molecule id="Q3TA38-1"/>
    <property type="nucleotide sequence ID" value="NM_001039723.3"/>
</dbReference>
<dbReference type="RefSeq" id="NP_001407209.1">
    <molecule id="Q3TA38-2"/>
    <property type="nucleotide sequence ID" value="NM_001420280.1"/>
</dbReference>
<dbReference type="SMR" id="Q3TA38"/>
<dbReference type="FunCoup" id="Q3TA38">
    <property type="interactions" value="229"/>
</dbReference>
<dbReference type="STRING" id="10090.ENSMUSP00000068551"/>
<dbReference type="iPTMnet" id="Q3TA38"/>
<dbReference type="PhosphoSitePlus" id="Q3TA38"/>
<dbReference type="SwissPalm" id="Q3TA38"/>
<dbReference type="PaxDb" id="10090-ENSMUSP00000068551"/>
<dbReference type="ProteomicsDB" id="254514">
    <molecule id="Q3TA38-1"/>
</dbReference>
<dbReference type="ProteomicsDB" id="254515">
    <molecule id="Q3TA38-2"/>
</dbReference>
<dbReference type="Pumba" id="Q3TA38"/>
<dbReference type="Antibodypedia" id="2742">
    <property type="antibodies" value="39 antibodies from 14 providers"/>
</dbReference>
<dbReference type="Ensembl" id="ENSMUST00000067505.15">
    <molecule id="Q3TA38-1"/>
    <property type="protein sequence ID" value="ENSMUSP00000068551.9"/>
    <property type="gene ID" value="ENSMUSG00000054434.15"/>
</dbReference>
<dbReference type="Ensembl" id="ENSMUST00000111619.10">
    <molecule id="Q3TA38-2"/>
    <property type="protein sequence ID" value="ENSMUSP00000107246.4"/>
    <property type="gene ID" value="ENSMUSG00000054434.15"/>
</dbReference>
<dbReference type="GeneID" id="330189"/>
<dbReference type="KEGG" id="mmu:330189"/>
<dbReference type="UCSC" id="uc008znc.1">
    <molecule id="Q3TA38-1"/>
    <property type="organism name" value="mouse"/>
</dbReference>
<dbReference type="UCSC" id="uc012edc.1">
    <molecule id="Q3TA38-2"/>
    <property type="organism name" value="mouse"/>
</dbReference>
<dbReference type="AGR" id="MGI:3603158"/>
<dbReference type="CTD" id="144404"/>
<dbReference type="MGI" id="MGI:3603158">
    <property type="gene designation" value="Tmem120b"/>
</dbReference>
<dbReference type="VEuPathDB" id="HostDB:ENSMUSG00000054434"/>
<dbReference type="eggNOG" id="KOG4758">
    <property type="taxonomic scope" value="Eukaryota"/>
</dbReference>
<dbReference type="GeneTree" id="ENSGT00390000007848"/>
<dbReference type="HOGENOM" id="CLU_048749_1_1_1"/>
<dbReference type="InParanoid" id="Q3TA38"/>
<dbReference type="OMA" id="WPNTGPW"/>
<dbReference type="OrthoDB" id="2015098at2759"/>
<dbReference type="PhylomeDB" id="Q3TA38"/>
<dbReference type="TreeFam" id="TF313552"/>
<dbReference type="BioGRID-ORCS" id="330189">
    <property type="hits" value="0 hits in 77 CRISPR screens"/>
</dbReference>
<dbReference type="ChiTaRS" id="Tmem120b">
    <property type="organism name" value="mouse"/>
</dbReference>
<dbReference type="PRO" id="PR:Q3TA38"/>
<dbReference type="Proteomes" id="UP000000589">
    <property type="component" value="Chromosome 5"/>
</dbReference>
<dbReference type="RNAct" id="Q3TA38">
    <property type="molecule type" value="protein"/>
</dbReference>
<dbReference type="Bgee" id="ENSMUSG00000054434">
    <property type="expression patterns" value="Expressed in brown adipose tissue and 221 other cell types or tissues"/>
</dbReference>
<dbReference type="ExpressionAtlas" id="Q3TA38">
    <property type="expression patterns" value="baseline and differential"/>
</dbReference>
<dbReference type="GO" id="GO:0005637">
    <property type="term" value="C:nuclear inner membrane"/>
    <property type="evidence" value="ECO:0000314"/>
    <property type="project" value="UniProtKB"/>
</dbReference>
<dbReference type="GO" id="GO:0045444">
    <property type="term" value="P:fat cell differentiation"/>
    <property type="evidence" value="ECO:0000315"/>
    <property type="project" value="UniProtKB"/>
</dbReference>
<dbReference type="GO" id="GO:0051291">
    <property type="term" value="P:protein heterooligomerization"/>
    <property type="evidence" value="ECO:0000314"/>
    <property type="project" value="UniProtKB"/>
</dbReference>
<dbReference type="InterPro" id="IPR012926">
    <property type="entry name" value="TMEM120A/B"/>
</dbReference>
<dbReference type="PANTHER" id="PTHR21433:SF2">
    <property type="entry name" value="TRANSMEMBRANE PROTEIN 120B"/>
    <property type="match status" value="1"/>
</dbReference>
<dbReference type="PANTHER" id="PTHR21433">
    <property type="entry name" value="TRANSMEMBRANE PROTEIN INDUCED BY TUMOR NECROSIS FACTOR ALPHA"/>
    <property type="match status" value="1"/>
</dbReference>
<dbReference type="Pfam" id="PF07851">
    <property type="entry name" value="TMEM120A-B"/>
    <property type="match status" value="1"/>
</dbReference>
<organism>
    <name type="scientific">Mus musculus</name>
    <name type="common">Mouse</name>
    <dbReference type="NCBI Taxonomy" id="10090"/>
    <lineage>
        <taxon>Eukaryota</taxon>
        <taxon>Metazoa</taxon>
        <taxon>Chordata</taxon>
        <taxon>Craniata</taxon>
        <taxon>Vertebrata</taxon>
        <taxon>Euteleostomi</taxon>
        <taxon>Mammalia</taxon>
        <taxon>Eutheria</taxon>
        <taxon>Euarchontoglires</taxon>
        <taxon>Glires</taxon>
        <taxon>Rodentia</taxon>
        <taxon>Myomorpha</taxon>
        <taxon>Muroidea</taxon>
        <taxon>Muridae</taxon>
        <taxon>Murinae</taxon>
        <taxon>Mus</taxon>
        <taxon>Mus</taxon>
    </lineage>
</organism>
<comment type="function">
    <text evidence="2 3">Necessary for efficient adipogenesis (PubMed:26024229). Does not show ion channel activity (PubMed:32084332).</text>
</comment>
<comment type="subunit">
    <text evidence="2">Heterooligomer with TMEM120A.</text>
</comment>
<comment type="subcellular location">
    <subcellularLocation>
        <location evidence="2">Nucleus inner membrane</location>
        <topology evidence="1">Multi-pass membrane protein</topology>
    </subcellularLocation>
</comment>
<comment type="alternative products">
    <event type="alternative splicing"/>
    <isoform>
        <id>Q3TA38-1</id>
        <name>1</name>
        <sequence type="displayed"/>
    </isoform>
    <isoform>
        <id>Q3TA38-2</id>
        <name>2</name>
        <sequence type="described" ref="VSP_029233"/>
    </isoform>
</comment>
<comment type="tissue specificity">
    <text evidence="2">Expressed in inguinal and subcutaneous white adipose tissue and in brown adipose tissue.</text>
</comment>
<comment type="induction">
    <text evidence="2">Up-regulated during adipocyte differentiation.</text>
</comment>
<comment type="similarity">
    <text evidence="7">Belongs to the TMEM120 family.</text>
</comment>
<gene>
    <name evidence="5 6 8" type="primary">Tmem120b</name>
</gene>
<reference key="1">
    <citation type="journal article" date="2005" name="Science">
        <title>The transcriptional landscape of the mammalian genome.</title>
        <authorList>
            <person name="Carninci P."/>
            <person name="Kasukawa T."/>
            <person name="Katayama S."/>
            <person name="Gough J."/>
            <person name="Frith M.C."/>
            <person name="Maeda N."/>
            <person name="Oyama R."/>
            <person name="Ravasi T."/>
            <person name="Lenhard B."/>
            <person name="Wells C."/>
            <person name="Kodzius R."/>
            <person name="Shimokawa K."/>
            <person name="Bajic V.B."/>
            <person name="Brenner S.E."/>
            <person name="Batalov S."/>
            <person name="Forrest A.R."/>
            <person name="Zavolan M."/>
            <person name="Davis M.J."/>
            <person name="Wilming L.G."/>
            <person name="Aidinis V."/>
            <person name="Allen J.E."/>
            <person name="Ambesi-Impiombato A."/>
            <person name="Apweiler R."/>
            <person name="Aturaliya R.N."/>
            <person name="Bailey T.L."/>
            <person name="Bansal M."/>
            <person name="Baxter L."/>
            <person name="Beisel K.W."/>
            <person name="Bersano T."/>
            <person name="Bono H."/>
            <person name="Chalk A.M."/>
            <person name="Chiu K.P."/>
            <person name="Choudhary V."/>
            <person name="Christoffels A."/>
            <person name="Clutterbuck D.R."/>
            <person name="Crowe M.L."/>
            <person name="Dalla E."/>
            <person name="Dalrymple B.P."/>
            <person name="de Bono B."/>
            <person name="Della Gatta G."/>
            <person name="di Bernardo D."/>
            <person name="Down T."/>
            <person name="Engstrom P."/>
            <person name="Fagiolini M."/>
            <person name="Faulkner G."/>
            <person name="Fletcher C.F."/>
            <person name="Fukushima T."/>
            <person name="Furuno M."/>
            <person name="Futaki S."/>
            <person name="Gariboldi M."/>
            <person name="Georgii-Hemming P."/>
            <person name="Gingeras T.R."/>
            <person name="Gojobori T."/>
            <person name="Green R.E."/>
            <person name="Gustincich S."/>
            <person name="Harbers M."/>
            <person name="Hayashi Y."/>
            <person name="Hensch T.K."/>
            <person name="Hirokawa N."/>
            <person name="Hill D."/>
            <person name="Huminiecki L."/>
            <person name="Iacono M."/>
            <person name="Ikeo K."/>
            <person name="Iwama A."/>
            <person name="Ishikawa T."/>
            <person name="Jakt M."/>
            <person name="Kanapin A."/>
            <person name="Katoh M."/>
            <person name="Kawasawa Y."/>
            <person name="Kelso J."/>
            <person name="Kitamura H."/>
            <person name="Kitano H."/>
            <person name="Kollias G."/>
            <person name="Krishnan S.P."/>
            <person name="Kruger A."/>
            <person name="Kummerfeld S.K."/>
            <person name="Kurochkin I.V."/>
            <person name="Lareau L.F."/>
            <person name="Lazarevic D."/>
            <person name="Lipovich L."/>
            <person name="Liu J."/>
            <person name="Liuni S."/>
            <person name="McWilliam S."/>
            <person name="Madan Babu M."/>
            <person name="Madera M."/>
            <person name="Marchionni L."/>
            <person name="Matsuda H."/>
            <person name="Matsuzawa S."/>
            <person name="Miki H."/>
            <person name="Mignone F."/>
            <person name="Miyake S."/>
            <person name="Morris K."/>
            <person name="Mottagui-Tabar S."/>
            <person name="Mulder N."/>
            <person name="Nakano N."/>
            <person name="Nakauchi H."/>
            <person name="Ng P."/>
            <person name="Nilsson R."/>
            <person name="Nishiguchi S."/>
            <person name="Nishikawa S."/>
            <person name="Nori F."/>
            <person name="Ohara O."/>
            <person name="Okazaki Y."/>
            <person name="Orlando V."/>
            <person name="Pang K.C."/>
            <person name="Pavan W.J."/>
            <person name="Pavesi G."/>
            <person name="Pesole G."/>
            <person name="Petrovsky N."/>
            <person name="Piazza S."/>
            <person name="Reed J."/>
            <person name="Reid J.F."/>
            <person name="Ring B.Z."/>
            <person name="Ringwald M."/>
            <person name="Rost B."/>
            <person name="Ruan Y."/>
            <person name="Salzberg S.L."/>
            <person name="Sandelin A."/>
            <person name="Schneider C."/>
            <person name="Schoenbach C."/>
            <person name="Sekiguchi K."/>
            <person name="Semple C.A."/>
            <person name="Seno S."/>
            <person name="Sessa L."/>
            <person name="Sheng Y."/>
            <person name="Shibata Y."/>
            <person name="Shimada H."/>
            <person name="Shimada K."/>
            <person name="Silva D."/>
            <person name="Sinclair B."/>
            <person name="Sperling S."/>
            <person name="Stupka E."/>
            <person name="Sugiura K."/>
            <person name="Sultana R."/>
            <person name="Takenaka Y."/>
            <person name="Taki K."/>
            <person name="Tammoja K."/>
            <person name="Tan S.L."/>
            <person name="Tang S."/>
            <person name="Taylor M.S."/>
            <person name="Tegner J."/>
            <person name="Teichmann S.A."/>
            <person name="Ueda H.R."/>
            <person name="van Nimwegen E."/>
            <person name="Verardo R."/>
            <person name="Wei C.L."/>
            <person name="Yagi K."/>
            <person name="Yamanishi H."/>
            <person name="Zabarovsky E."/>
            <person name="Zhu S."/>
            <person name="Zimmer A."/>
            <person name="Hide W."/>
            <person name="Bult C."/>
            <person name="Grimmond S.M."/>
            <person name="Teasdale R.D."/>
            <person name="Liu E.T."/>
            <person name="Brusic V."/>
            <person name="Quackenbush J."/>
            <person name="Wahlestedt C."/>
            <person name="Mattick J.S."/>
            <person name="Hume D.A."/>
            <person name="Kai C."/>
            <person name="Sasaki D."/>
            <person name="Tomaru Y."/>
            <person name="Fukuda S."/>
            <person name="Kanamori-Katayama M."/>
            <person name="Suzuki M."/>
            <person name="Aoki J."/>
            <person name="Arakawa T."/>
            <person name="Iida J."/>
            <person name="Imamura K."/>
            <person name="Itoh M."/>
            <person name="Kato T."/>
            <person name="Kawaji H."/>
            <person name="Kawagashira N."/>
            <person name="Kawashima T."/>
            <person name="Kojima M."/>
            <person name="Kondo S."/>
            <person name="Konno H."/>
            <person name="Nakano K."/>
            <person name="Ninomiya N."/>
            <person name="Nishio T."/>
            <person name="Okada M."/>
            <person name="Plessy C."/>
            <person name="Shibata K."/>
            <person name="Shiraki T."/>
            <person name="Suzuki S."/>
            <person name="Tagami M."/>
            <person name="Waki K."/>
            <person name="Watahiki A."/>
            <person name="Okamura-Oho Y."/>
            <person name="Suzuki H."/>
            <person name="Kawai J."/>
            <person name="Hayashizaki Y."/>
        </authorList>
    </citation>
    <scope>NUCLEOTIDE SEQUENCE [LARGE SCALE MRNA] (ISOFORM 1)</scope>
    <source>
        <strain>C57BL/6J</strain>
        <strain>NOD</strain>
        <tissue>Inner ear</tissue>
        <tissue>Spleen</tissue>
    </source>
</reference>
<reference key="2">
    <citation type="journal article" date="2004" name="Genome Res.">
        <title>The status, quality, and expansion of the NIH full-length cDNA project: the Mammalian Gene Collection (MGC).</title>
        <authorList>
            <consortium name="The MGC Project Team"/>
        </authorList>
    </citation>
    <scope>NUCLEOTIDE SEQUENCE [LARGE SCALE MRNA] (ISOFORMS 1 AND 2)</scope>
    <source>
        <tissue>Mammary tumor</tissue>
    </source>
</reference>
<reference key="3">
    <citation type="journal article" date="2015" name="PLoS ONE">
        <title>TMEM120A and B: nuclear envelope transmembrane proteins important for adipocyte differentiation.</title>
        <authorList>
            <person name="Batrakou D.G."/>
            <person name="de Las Heras J.I."/>
            <person name="Czapiewski R."/>
            <person name="Mouras R."/>
            <person name="Schirmer E.C."/>
        </authorList>
    </citation>
    <scope>FUNCTION</scope>
    <scope>SUBCELLULAR LOCATION</scope>
    <scope>INDUCTION</scope>
    <scope>TISSUE SPECIFICITY</scope>
</reference>
<reference key="4">
    <citation type="journal article" date="2020" name="Cell">
        <title>TACAN is an ion channel involved in sensing mechanical pain.</title>
        <authorList>
            <person name="Beaulieu-Laroche L."/>
            <person name="Christin M."/>
            <person name="Donoghue A."/>
            <person name="Agosti F."/>
            <person name="Yousefpour N."/>
            <person name="Petitjean H."/>
            <person name="Davidova A."/>
            <person name="Stanton C."/>
            <person name="Khan U."/>
            <person name="Dietz C."/>
            <person name="Faure E."/>
            <person name="Fatima T."/>
            <person name="MacPherson A."/>
            <person name="Mouchbahani-Constance S."/>
            <person name="Bisson D.G."/>
            <person name="Haglund L."/>
            <person name="Ouellet J.A."/>
            <person name="Stone L.S."/>
            <person name="Samson J."/>
            <person name="Smith M.J."/>
            <person name="Ask K."/>
            <person name="Ribeiro-da-Silva A."/>
            <person name="Blunck R."/>
            <person name="Poole K."/>
            <person name="Bourinet E."/>
            <person name="Sharif-Naeini R."/>
        </authorList>
    </citation>
    <scope>FUNCTION</scope>
</reference>
<keyword id="KW-0025">Alternative splicing</keyword>
<keyword id="KW-0175">Coiled coil</keyword>
<keyword id="KW-0472">Membrane</keyword>
<keyword id="KW-0539">Nucleus</keyword>
<keyword id="KW-1185">Reference proteome</keyword>
<keyword id="KW-0812">Transmembrane</keyword>
<keyword id="KW-1133">Transmembrane helix</keyword>